<organism>
    <name type="scientific">Carboxydothermus hydrogenoformans (strain ATCC BAA-161 / DSM 6008 / Z-2901)</name>
    <dbReference type="NCBI Taxonomy" id="246194"/>
    <lineage>
        <taxon>Bacteria</taxon>
        <taxon>Bacillati</taxon>
        <taxon>Bacillota</taxon>
        <taxon>Clostridia</taxon>
        <taxon>Thermoanaerobacterales</taxon>
        <taxon>Thermoanaerobacteraceae</taxon>
        <taxon>Carboxydothermus</taxon>
    </lineage>
</organism>
<name>HISX_CARHZ</name>
<keyword id="KW-0028">Amino-acid biosynthesis</keyword>
<keyword id="KW-0368">Histidine biosynthesis</keyword>
<keyword id="KW-0479">Metal-binding</keyword>
<keyword id="KW-0520">NAD</keyword>
<keyword id="KW-0560">Oxidoreductase</keyword>
<keyword id="KW-1185">Reference proteome</keyword>
<keyword id="KW-0862">Zinc</keyword>
<evidence type="ECO:0000255" key="1">
    <source>
        <dbReference type="HAMAP-Rule" id="MF_01024"/>
    </source>
</evidence>
<accession>Q3AD53</accession>
<dbReference type="EC" id="1.1.1.23" evidence="1"/>
<dbReference type="EMBL" id="CP000141">
    <property type="protein sequence ID" value="ABB15954.1"/>
    <property type="molecule type" value="Genomic_DNA"/>
</dbReference>
<dbReference type="RefSeq" id="WP_011344007.1">
    <property type="nucleotide sequence ID" value="NC_007503.1"/>
</dbReference>
<dbReference type="SMR" id="Q3AD53"/>
<dbReference type="FunCoup" id="Q3AD53">
    <property type="interactions" value="442"/>
</dbReference>
<dbReference type="STRING" id="246194.CHY_1085"/>
<dbReference type="KEGG" id="chy:CHY_1085"/>
<dbReference type="eggNOG" id="COG0141">
    <property type="taxonomic scope" value="Bacteria"/>
</dbReference>
<dbReference type="HOGENOM" id="CLU_006732_3_3_9"/>
<dbReference type="InParanoid" id="Q3AD53"/>
<dbReference type="OrthoDB" id="9805269at2"/>
<dbReference type="UniPathway" id="UPA00031">
    <property type="reaction ID" value="UER00014"/>
</dbReference>
<dbReference type="Proteomes" id="UP000002706">
    <property type="component" value="Chromosome"/>
</dbReference>
<dbReference type="GO" id="GO:0005829">
    <property type="term" value="C:cytosol"/>
    <property type="evidence" value="ECO:0007669"/>
    <property type="project" value="TreeGrafter"/>
</dbReference>
<dbReference type="GO" id="GO:0004399">
    <property type="term" value="F:histidinol dehydrogenase activity"/>
    <property type="evidence" value="ECO:0007669"/>
    <property type="project" value="UniProtKB-UniRule"/>
</dbReference>
<dbReference type="GO" id="GO:0051287">
    <property type="term" value="F:NAD binding"/>
    <property type="evidence" value="ECO:0007669"/>
    <property type="project" value="InterPro"/>
</dbReference>
<dbReference type="GO" id="GO:0008270">
    <property type="term" value="F:zinc ion binding"/>
    <property type="evidence" value="ECO:0007669"/>
    <property type="project" value="UniProtKB-UniRule"/>
</dbReference>
<dbReference type="GO" id="GO:0000105">
    <property type="term" value="P:L-histidine biosynthetic process"/>
    <property type="evidence" value="ECO:0007669"/>
    <property type="project" value="UniProtKB-UniRule"/>
</dbReference>
<dbReference type="CDD" id="cd06572">
    <property type="entry name" value="Histidinol_dh"/>
    <property type="match status" value="1"/>
</dbReference>
<dbReference type="FunFam" id="3.40.50.1980:FF:000001">
    <property type="entry name" value="Histidinol dehydrogenase"/>
    <property type="match status" value="1"/>
</dbReference>
<dbReference type="FunFam" id="3.40.50.1980:FF:000026">
    <property type="entry name" value="Histidinol dehydrogenase"/>
    <property type="match status" value="1"/>
</dbReference>
<dbReference type="Gene3D" id="1.20.5.1300">
    <property type="match status" value="1"/>
</dbReference>
<dbReference type="Gene3D" id="3.40.50.1980">
    <property type="entry name" value="Nitrogenase molybdenum iron protein domain"/>
    <property type="match status" value="2"/>
</dbReference>
<dbReference type="HAMAP" id="MF_01024">
    <property type="entry name" value="HisD"/>
    <property type="match status" value="1"/>
</dbReference>
<dbReference type="InterPro" id="IPR016161">
    <property type="entry name" value="Ald_DH/histidinol_DH"/>
</dbReference>
<dbReference type="InterPro" id="IPR001692">
    <property type="entry name" value="Histidinol_DH_CS"/>
</dbReference>
<dbReference type="InterPro" id="IPR022695">
    <property type="entry name" value="Histidinol_DH_monofunct"/>
</dbReference>
<dbReference type="InterPro" id="IPR012131">
    <property type="entry name" value="Hstdl_DH"/>
</dbReference>
<dbReference type="NCBIfam" id="TIGR00069">
    <property type="entry name" value="hisD"/>
    <property type="match status" value="1"/>
</dbReference>
<dbReference type="PANTHER" id="PTHR21256:SF2">
    <property type="entry name" value="HISTIDINE BIOSYNTHESIS TRIFUNCTIONAL PROTEIN"/>
    <property type="match status" value="1"/>
</dbReference>
<dbReference type="PANTHER" id="PTHR21256">
    <property type="entry name" value="HISTIDINOL DEHYDROGENASE HDH"/>
    <property type="match status" value="1"/>
</dbReference>
<dbReference type="Pfam" id="PF00815">
    <property type="entry name" value="Histidinol_dh"/>
    <property type="match status" value="1"/>
</dbReference>
<dbReference type="PIRSF" id="PIRSF000099">
    <property type="entry name" value="Histidinol_dh"/>
    <property type="match status" value="1"/>
</dbReference>
<dbReference type="PRINTS" id="PR00083">
    <property type="entry name" value="HOLDHDRGNASE"/>
</dbReference>
<dbReference type="SUPFAM" id="SSF53720">
    <property type="entry name" value="ALDH-like"/>
    <property type="match status" value="1"/>
</dbReference>
<dbReference type="PROSITE" id="PS00611">
    <property type="entry name" value="HISOL_DEHYDROGENASE"/>
    <property type="match status" value="1"/>
</dbReference>
<protein>
    <recommendedName>
        <fullName evidence="1">Histidinol dehydrogenase</fullName>
        <shortName evidence="1">HDH</shortName>
        <ecNumber evidence="1">1.1.1.23</ecNumber>
    </recommendedName>
</protein>
<sequence length="425" mass="46608">MKLILNKEELLDKYSRRKAVEEDIEQQVRKILNEVASSGDEALIEYAREFDGFKGDLSNLKVSEEEIDKAYREVDDGFLNSLRKAIQRVFDFHQKQLPRSWFTTEENGNILGQIYTPVEVAGIYVPGGTAAYPSSVVMNAVPAKVAGVKRIVMVSPQKGERMNPYVLVAAREAGVTEIYRVGGAHAIAALAFGTKTIPRVDVITGPGNIYVTIAKKLVYGTVNIDMLAGPSEVVVIADSSAKPEYLAADMLSQAEHDSLASGVVITWDGELARKTAQKVEEYLKLLPRREIILKALENCGGIVVVDDEEEALQLANQLAPEHLELMLPNPFGYLAKVKNAGAVFLGQFSPEPMGDYLAGPNHVLPTSGTSRFYSPLSVDNFLKKSSVIYYSQEGFLADARDVIKLAETEGLFAHALSVKVRISNE</sequence>
<gene>
    <name evidence="1" type="primary">hisD</name>
    <name type="ordered locus">CHY_1085</name>
</gene>
<reference key="1">
    <citation type="journal article" date="2005" name="PLoS Genet.">
        <title>Life in hot carbon monoxide: the complete genome sequence of Carboxydothermus hydrogenoformans Z-2901.</title>
        <authorList>
            <person name="Wu M."/>
            <person name="Ren Q."/>
            <person name="Durkin A.S."/>
            <person name="Daugherty S.C."/>
            <person name="Brinkac L.M."/>
            <person name="Dodson R.J."/>
            <person name="Madupu R."/>
            <person name="Sullivan S.A."/>
            <person name="Kolonay J.F."/>
            <person name="Nelson W.C."/>
            <person name="Tallon L.J."/>
            <person name="Jones K.M."/>
            <person name="Ulrich L.E."/>
            <person name="Gonzalez J.M."/>
            <person name="Zhulin I.B."/>
            <person name="Robb F.T."/>
            <person name="Eisen J.A."/>
        </authorList>
    </citation>
    <scope>NUCLEOTIDE SEQUENCE [LARGE SCALE GENOMIC DNA]</scope>
    <source>
        <strain>ATCC BAA-161 / DSM 6008 / Z-2901</strain>
    </source>
</reference>
<comment type="function">
    <text evidence="1">Catalyzes the sequential NAD-dependent oxidations of L-histidinol to L-histidinaldehyde and then to L-histidine.</text>
</comment>
<comment type="catalytic activity">
    <reaction evidence="1">
        <text>L-histidinol + 2 NAD(+) + H2O = L-histidine + 2 NADH + 3 H(+)</text>
        <dbReference type="Rhea" id="RHEA:20641"/>
        <dbReference type="ChEBI" id="CHEBI:15377"/>
        <dbReference type="ChEBI" id="CHEBI:15378"/>
        <dbReference type="ChEBI" id="CHEBI:57540"/>
        <dbReference type="ChEBI" id="CHEBI:57595"/>
        <dbReference type="ChEBI" id="CHEBI:57699"/>
        <dbReference type="ChEBI" id="CHEBI:57945"/>
        <dbReference type="EC" id="1.1.1.23"/>
    </reaction>
</comment>
<comment type="cofactor">
    <cofactor evidence="1">
        <name>Zn(2+)</name>
        <dbReference type="ChEBI" id="CHEBI:29105"/>
    </cofactor>
    <text evidence="1">Binds 1 zinc ion per subunit.</text>
</comment>
<comment type="pathway">
    <text evidence="1">Amino-acid biosynthesis; L-histidine biosynthesis; L-histidine from 5-phospho-alpha-D-ribose 1-diphosphate: step 9/9.</text>
</comment>
<comment type="similarity">
    <text evidence="1">Belongs to the histidinol dehydrogenase family.</text>
</comment>
<proteinExistence type="inferred from homology"/>
<feature type="chain" id="PRO_0000229854" description="Histidinol dehydrogenase">
    <location>
        <begin position="1"/>
        <end position="425"/>
    </location>
</feature>
<feature type="active site" description="Proton acceptor" evidence="1">
    <location>
        <position position="321"/>
    </location>
</feature>
<feature type="active site" description="Proton acceptor" evidence="1">
    <location>
        <position position="322"/>
    </location>
</feature>
<feature type="binding site" evidence="1">
    <location>
        <position position="231"/>
    </location>
    <ligand>
        <name>substrate</name>
    </ligand>
</feature>
<feature type="binding site" evidence="1">
    <location>
        <position position="253"/>
    </location>
    <ligand>
        <name>substrate</name>
    </ligand>
</feature>
<feature type="binding site" evidence="1">
    <location>
        <position position="253"/>
    </location>
    <ligand>
        <name>Zn(2+)</name>
        <dbReference type="ChEBI" id="CHEBI:29105"/>
    </ligand>
</feature>
<feature type="binding site" evidence="1">
    <location>
        <position position="256"/>
    </location>
    <ligand>
        <name>substrate</name>
    </ligand>
</feature>
<feature type="binding site" evidence="1">
    <location>
        <position position="256"/>
    </location>
    <ligand>
        <name>Zn(2+)</name>
        <dbReference type="ChEBI" id="CHEBI:29105"/>
    </ligand>
</feature>
<feature type="binding site" evidence="1">
    <location>
        <position position="322"/>
    </location>
    <ligand>
        <name>substrate</name>
    </ligand>
</feature>
<feature type="binding site" evidence="1">
    <location>
        <position position="355"/>
    </location>
    <ligand>
        <name>substrate</name>
    </ligand>
</feature>
<feature type="binding site" evidence="1">
    <location>
        <position position="355"/>
    </location>
    <ligand>
        <name>Zn(2+)</name>
        <dbReference type="ChEBI" id="CHEBI:29105"/>
    </ligand>
</feature>
<feature type="binding site" evidence="1">
    <location>
        <position position="409"/>
    </location>
    <ligand>
        <name>substrate</name>
    </ligand>
</feature>
<feature type="binding site" evidence="1">
    <location>
        <position position="414"/>
    </location>
    <ligand>
        <name>substrate</name>
    </ligand>
</feature>
<feature type="binding site" evidence="1">
    <location>
        <position position="414"/>
    </location>
    <ligand>
        <name>Zn(2+)</name>
        <dbReference type="ChEBI" id="CHEBI:29105"/>
    </ligand>
</feature>